<sequence length="539" mass="58067">MAAKMILFDEEARRALERGVNKLADTVKVTLGPKGRNVVLEKKFGSPQIVNDGVTIAKEIELEDPFENMGAQIVREVASKTNDIAGDGTTTATVLAQAMIREGLKNIAAGANPMILRKGIQKAVDVVVEEIRKMSKKVRGKEDITYVASISAGDEEIGKLVADAMEKVTNDGVITVEESKTTETTLEIVEGMQFDRGYISAYMVTDTERMEAVLDDPYILITDKKISTIQDILPLLEQIVQQGRKLLIIAEDVEGEALATLVVNKLRGTLQCVAVKAPGFGDRRKAMLQDIAILTGGQVISEELGLDLREVKLSQLGRARQVKVQKENTIIVDGAGDPSEIKARIQSIKKQIEETTSDFDREKLQERLAKLAGGVAVIHVGAATETELKEKKLRIEDALAATKAAVEEGIVPGGGTALINAIPALDKLIESLTGDEKTGAMIVRKALEEPLRQIAENAGLDGSVIVNKVKESPAGVGFDALNERFVDMFEAGIVDPTKVTRTAIQNAASAAAMLLTTEAVVAEKPEKEKNPPAPAPDMY</sequence>
<gene>
    <name evidence="1" type="primary">groEL</name>
    <name evidence="1" type="synonym">groL</name>
    <name type="ordered locus">Athe_2137</name>
</gene>
<accession>B9MLY9</accession>
<protein>
    <recommendedName>
        <fullName evidence="1">Chaperonin GroEL</fullName>
        <ecNumber evidence="1">5.6.1.7</ecNumber>
    </recommendedName>
    <alternativeName>
        <fullName evidence="1">60 kDa chaperonin</fullName>
    </alternativeName>
    <alternativeName>
        <fullName evidence="1">Chaperonin-60</fullName>
        <shortName evidence="1">Cpn60</shortName>
    </alternativeName>
</protein>
<comment type="function">
    <text evidence="1">Together with its co-chaperonin GroES, plays an essential role in assisting protein folding. The GroEL-GroES system forms a nano-cage that allows encapsulation of the non-native substrate proteins and provides a physical environment optimized to promote and accelerate protein folding.</text>
</comment>
<comment type="catalytic activity">
    <reaction evidence="1">
        <text>ATP + H2O + a folded polypeptide = ADP + phosphate + an unfolded polypeptide.</text>
        <dbReference type="EC" id="5.6.1.7"/>
    </reaction>
</comment>
<comment type="subunit">
    <text evidence="1">Forms a cylinder of 14 subunits composed of two heptameric rings stacked back-to-back. Interacts with the co-chaperonin GroES.</text>
</comment>
<comment type="subcellular location">
    <subcellularLocation>
        <location evidence="1">Cytoplasm</location>
    </subcellularLocation>
</comment>
<comment type="similarity">
    <text evidence="1">Belongs to the chaperonin (HSP60) family.</text>
</comment>
<evidence type="ECO:0000255" key="1">
    <source>
        <dbReference type="HAMAP-Rule" id="MF_00600"/>
    </source>
</evidence>
<dbReference type="EC" id="5.6.1.7" evidence="1"/>
<dbReference type="EMBL" id="CP001393">
    <property type="protein sequence ID" value="ACM61212.1"/>
    <property type="molecule type" value="Genomic_DNA"/>
</dbReference>
<dbReference type="RefSeq" id="WP_013402565.1">
    <property type="nucleotide sequence ID" value="NC_012034.1"/>
</dbReference>
<dbReference type="SMR" id="B9MLY9"/>
<dbReference type="STRING" id="521460.Athe_2137"/>
<dbReference type="GeneID" id="31773486"/>
<dbReference type="KEGG" id="ate:Athe_2137"/>
<dbReference type="eggNOG" id="COG0459">
    <property type="taxonomic scope" value="Bacteria"/>
</dbReference>
<dbReference type="HOGENOM" id="CLU_016503_1_1_9"/>
<dbReference type="Proteomes" id="UP000007723">
    <property type="component" value="Chromosome"/>
</dbReference>
<dbReference type="GO" id="GO:0005737">
    <property type="term" value="C:cytoplasm"/>
    <property type="evidence" value="ECO:0007669"/>
    <property type="project" value="UniProtKB-SubCell"/>
</dbReference>
<dbReference type="GO" id="GO:0005524">
    <property type="term" value="F:ATP binding"/>
    <property type="evidence" value="ECO:0007669"/>
    <property type="project" value="UniProtKB-UniRule"/>
</dbReference>
<dbReference type="GO" id="GO:0140662">
    <property type="term" value="F:ATP-dependent protein folding chaperone"/>
    <property type="evidence" value="ECO:0007669"/>
    <property type="project" value="InterPro"/>
</dbReference>
<dbReference type="GO" id="GO:0016853">
    <property type="term" value="F:isomerase activity"/>
    <property type="evidence" value="ECO:0007669"/>
    <property type="project" value="UniProtKB-KW"/>
</dbReference>
<dbReference type="GO" id="GO:0051082">
    <property type="term" value="F:unfolded protein binding"/>
    <property type="evidence" value="ECO:0007669"/>
    <property type="project" value="UniProtKB-UniRule"/>
</dbReference>
<dbReference type="GO" id="GO:0042026">
    <property type="term" value="P:protein refolding"/>
    <property type="evidence" value="ECO:0007669"/>
    <property type="project" value="UniProtKB-UniRule"/>
</dbReference>
<dbReference type="CDD" id="cd03344">
    <property type="entry name" value="GroEL"/>
    <property type="match status" value="1"/>
</dbReference>
<dbReference type="FunFam" id="1.10.560.10:FF:000001">
    <property type="entry name" value="60 kDa chaperonin"/>
    <property type="match status" value="1"/>
</dbReference>
<dbReference type="FunFam" id="3.50.7.10:FF:000001">
    <property type="entry name" value="60 kDa chaperonin"/>
    <property type="match status" value="1"/>
</dbReference>
<dbReference type="Gene3D" id="3.50.7.10">
    <property type="entry name" value="GroEL"/>
    <property type="match status" value="1"/>
</dbReference>
<dbReference type="Gene3D" id="1.10.560.10">
    <property type="entry name" value="GroEL-like equatorial domain"/>
    <property type="match status" value="1"/>
</dbReference>
<dbReference type="Gene3D" id="3.30.260.10">
    <property type="entry name" value="TCP-1-like chaperonin intermediate domain"/>
    <property type="match status" value="1"/>
</dbReference>
<dbReference type="HAMAP" id="MF_00600">
    <property type="entry name" value="CH60"/>
    <property type="match status" value="1"/>
</dbReference>
<dbReference type="InterPro" id="IPR018370">
    <property type="entry name" value="Chaperonin_Cpn60_CS"/>
</dbReference>
<dbReference type="InterPro" id="IPR001844">
    <property type="entry name" value="Cpn60/GroEL"/>
</dbReference>
<dbReference type="InterPro" id="IPR002423">
    <property type="entry name" value="Cpn60/GroEL/TCP-1"/>
</dbReference>
<dbReference type="InterPro" id="IPR027409">
    <property type="entry name" value="GroEL-like_apical_dom_sf"/>
</dbReference>
<dbReference type="InterPro" id="IPR027413">
    <property type="entry name" value="GROEL-like_equatorial_sf"/>
</dbReference>
<dbReference type="InterPro" id="IPR027410">
    <property type="entry name" value="TCP-1-like_intermed_sf"/>
</dbReference>
<dbReference type="NCBIfam" id="TIGR02348">
    <property type="entry name" value="GroEL"/>
    <property type="match status" value="1"/>
</dbReference>
<dbReference type="NCBIfam" id="NF000592">
    <property type="entry name" value="PRK00013.1"/>
    <property type="match status" value="1"/>
</dbReference>
<dbReference type="NCBIfam" id="NF009487">
    <property type="entry name" value="PRK12849.1"/>
    <property type="match status" value="1"/>
</dbReference>
<dbReference type="NCBIfam" id="NF009488">
    <property type="entry name" value="PRK12850.1"/>
    <property type="match status" value="1"/>
</dbReference>
<dbReference type="NCBIfam" id="NF009489">
    <property type="entry name" value="PRK12851.1"/>
    <property type="match status" value="1"/>
</dbReference>
<dbReference type="PANTHER" id="PTHR45633">
    <property type="entry name" value="60 KDA HEAT SHOCK PROTEIN, MITOCHONDRIAL"/>
    <property type="match status" value="1"/>
</dbReference>
<dbReference type="Pfam" id="PF00118">
    <property type="entry name" value="Cpn60_TCP1"/>
    <property type="match status" value="1"/>
</dbReference>
<dbReference type="PRINTS" id="PR00298">
    <property type="entry name" value="CHAPERONIN60"/>
</dbReference>
<dbReference type="SUPFAM" id="SSF52029">
    <property type="entry name" value="GroEL apical domain-like"/>
    <property type="match status" value="1"/>
</dbReference>
<dbReference type="SUPFAM" id="SSF48592">
    <property type="entry name" value="GroEL equatorial domain-like"/>
    <property type="match status" value="1"/>
</dbReference>
<dbReference type="SUPFAM" id="SSF54849">
    <property type="entry name" value="GroEL-intermediate domain like"/>
    <property type="match status" value="1"/>
</dbReference>
<dbReference type="PROSITE" id="PS00296">
    <property type="entry name" value="CHAPERONINS_CPN60"/>
    <property type="match status" value="1"/>
</dbReference>
<keyword id="KW-0067">ATP-binding</keyword>
<keyword id="KW-0143">Chaperone</keyword>
<keyword id="KW-0963">Cytoplasm</keyword>
<keyword id="KW-0413">Isomerase</keyword>
<keyword id="KW-0547">Nucleotide-binding</keyword>
<reference key="1">
    <citation type="submission" date="2009-01" db="EMBL/GenBank/DDBJ databases">
        <title>Complete sequence of chromosome of Caldicellulosiruptor becscii DSM 6725.</title>
        <authorList>
            <person name="Lucas S."/>
            <person name="Copeland A."/>
            <person name="Lapidus A."/>
            <person name="Glavina del Rio T."/>
            <person name="Tice H."/>
            <person name="Bruce D."/>
            <person name="Goodwin L."/>
            <person name="Pitluck S."/>
            <person name="Sims D."/>
            <person name="Meincke L."/>
            <person name="Brettin T."/>
            <person name="Detter J.C."/>
            <person name="Han C."/>
            <person name="Larimer F."/>
            <person name="Land M."/>
            <person name="Hauser L."/>
            <person name="Kyrpides N."/>
            <person name="Ovchinnikova G."/>
            <person name="Kataeva I."/>
            <person name="Adams M.W.W."/>
        </authorList>
    </citation>
    <scope>NUCLEOTIDE SEQUENCE [LARGE SCALE GENOMIC DNA]</scope>
    <source>
        <strain>ATCC BAA-1888 / DSM 6725 / KCTC 15123 / Z-1320</strain>
    </source>
</reference>
<organism>
    <name type="scientific">Caldicellulosiruptor bescii (strain ATCC BAA-1888 / DSM 6725 / KCTC 15123 / Z-1320)</name>
    <name type="common">Anaerocellum thermophilum</name>
    <dbReference type="NCBI Taxonomy" id="521460"/>
    <lineage>
        <taxon>Bacteria</taxon>
        <taxon>Bacillati</taxon>
        <taxon>Bacillota</taxon>
        <taxon>Bacillota incertae sedis</taxon>
        <taxon>Caldicellulosiruptorales</taxon>
        <taxon>Caldicellulosiruptoraceae</taxon>
        <taxon>Caldicellulosiruptor</taxon>
    </lineage>
</organism>
<proteinExistence type="inferred from homology"/>
<feature type="chain" id="PRO_1000147012" description="Chaperonin GroEL">
    <location>
        <begin position="1"/>
        <end position="539"/>
    </location>
</feature>
<feature type="binding site" evidence="1">
    <location>
        <begin position="30"/>
        <end position="33"/>
    </location>
    <ligand>
        <name>ATP</name>
        <dbReference type="ChEBI" id="CHEBI:30616"/>
    </ligand>
</feature>
<feature type="binding site" evidence="1">
    <location>
        <begin position="87"/>
        <end position="91"/>
    </location>
    <ligand>
        <name>ATP</name>
        <dbReference type="ChEBI" id="CHEBI:30616"/>
    </ligand>
</feature>
<feature type="binding site" evidence="1">
    <location>
        <position position="414"/>
    </location>
    <ligand>
        <name>ATP</name>
        <dbReference type="ChEBI" id="CHEBI:30616"/>
    </ligand>
</feature>
<feature type="binding site" evidence="1">
    <location>
        <begin position="479"/>
        <end position="481"/>
    </location>
    <ligand>
        <name>ATP</name>
        <dbReference type="ChEBI" id="CHEBI:30616"/>
    </ligand>
</feature>
<feature type="binding site" evidence="1">
    <location>
        <position position="495"/>
    </location>
    <ligand>
        <name>ATP</name>
        <dbReference type="ChEBI" id="CHEBI:30616"/>
    </ligand>
</feature>
<name>CH60_CALBD</name>